<reference key="1">
    <citation type="journal article" date="2007" name="Nat. Biotechnol.">
        <title>Genome sequence of the lignocellulose-bioconverting and xylose-fermenting yeast Pichia stipitis.</title>
        <authorList>
            <person name="Jeffries T.W."/>
            <person name="Grigoriev I.V."/>
            <person name="Grimwood J."/>
            <person name="Laplaza J.M."/>
            <person name="Aerts A."/>
            <person name="Salamov A."/>
            <person name="Schmutz J."/>
            <person name="Lindquist E."/>
            <person name="Dehal P."/>
            <person name="Shapiro H."/>
            <person name="Jin Y.-S."/>
            <person name="Passoth V."/>
            <person name="Richardson P.M."/>
        </authorList>
    </citation>
    <scope>NUCLEOTIDE SEQUENCE [LARGE SCALE GENOMIC DNA]</scope>
    <source>
        <strain>ATCC 58785 / CBS 6054 / NBRC 10063 / NRRL Y-11545</strain>
    </source>
</reference>
<comment type="function">
    <text evidence="1">Allows the formation of correctly charged Gln-tRNA(Gln) through the transamidation of misacylated Glu-tRNA(Gln) in the mitochondria. The reaction takes place in the presence of glutamine and ATP through an activated gamma-phospho-Glu-tRNA(Gln).</text>
</comment>
<comment type="catalytic activity">
    <reaction evidence="1">
        <text>L-glutamyl-tRNA(Gln) + L-glutamine + ATP + H2O = L-glutaminyl-tRNA(Gln) + L-glutamate + ADP + phosphate + H(+)</text>
        <dbReference type="Rhea" id="RHEA:17521"/>
        <dbReference type="Rhea" id="RHEA-COMP:9681"/>
        <dbReference type="Rhea" id="RHEA-COMP:9684"/>
        <dbReference type="ChEBI" id="CHEBI:15377"/>
        <dbReference type="ChEBI" id="CHEBI:15378"/>
        <dbReference type="ChEBI" id="CHEBI:29985"/>
        <dbReference type="ChEBI" id="CHEBI:30616"/>
        <dbReference type="ChEBI" id="CHEBI:43474"/>
        <dbReference type="ChEBI" id="CHEBI:58359"/>
        <dbReference type="ChEBI" id="CHEBI:78520"/>
        <dbReference type="ChEBI" id="CHEBI:78521"/>
        <dbReference type="ChEBI" id="CHEBI:456216"/>
    </reaction>
</comment>
<comment type="subunit">
    <text evidence="1">Subunit of the heterotrimeric GatFAB amidotransferase (AdT) complex, composed of A, B and F subunits.</text>
</comment>
<comment type="subcellular location">
    <subcellularLocation>
        <location evidence="1">Mitochondrion</location>
    </subcellularLocation>
</comment>
<comment type="miscellaneous">
    <text evidence="1">This protein may be expected to contain an N-terminal transit peptide but none has been predicted.</text>
</comment>
<comment type="similarity">
    <text evidence="1">Belongs to the GatB/GatE family. GatB subfamily.</text>
</comment>
<name>GATB_PICST</name>
<evidence type="ECO:0000255" key="1">
    <source>
        <dbReference type="HAMAP-Rule" id="MF_03147"/>
    </source>
</evidence>
<feature type="chain" id="PRO_0000413273" description="Glutamyl-tRNA(Gln) amidotransferase subunit B, mitochondrial">
    <location>
        <begin position="1"/>
        <end position="508"/>
    </location>
</feature>
<keyword id="KW-0067">ATP-binding</keyword>
<keyword id="KW-0436">Ligase</keyword>
<keyword id="KW-0496">Mitochondrion</keyword>
<keyword id="KW-0547">Nucleotide-binding</keyword>
<keyword id="KW-0648">Protein biosynthesis</keyword>
<keyword id="KW-1185">Reference proteome</keyword>
<proteinExistence type="inferred from homology"/>
<accession>A3GFV6</accession>
<sequence length="508" mass="58177">MRSIRLFHTSSTWLSKFKLDPNYKFKCGIEIHTQLKTKYKLFSLSPTSFYSTPNSKVSYFDCGLPGTQPKLNPEALYLALKLAVALDCEIQQNSSFDRKHYFYPDQPLGYQITQHYHPIAKNGFLELNSKFDEIKNSSKKINIEQIQIEQDTGKTTYDKFDKSVKVDYNRSNMPLIELVTKPDFEDLQQVRAFVKKYQTMVRHLDICTGDLETGAIRIDVNVSVNGNPRVEIKNLGSNSDIQDALKYEYTRQVDSIKNNEKIIQETRGWTGTKTVSLRLKEDAVDYRYVPDSELPFINLSPTIASDIKESLPELPEQILQKLTSKPYDLELKYARFLTENRDTLNYYFQLFKSVADRHHSGKLANNWFIHEFLGAFTKINVKVDLDILPANFLADLVLQVAEKNISTTSARLLLLQIIQTPEDKGKPIQDLIVQYDLGSPVDMSTEDLNDAVSDICSEIISNNADVVERIKKGQKNSIKFLIGLAMKETQGKVNAKTFSEKFNELLDL</sequence>
<gene>
    <name evidence="1" type="primary">PET112</name>
    <name type="ORF">PICST_52015</name>
</gene>
<protein>
    <recommendedName>
        <fullName evidence="1">Glutamyl-tRNA(Gln) amidotransferase subunit B, mitochondrial</fullName>
        <shortName evidence="1">Glu-AdT subunit B</shortName>
        <ecNumber evidence="1">6.3.5.-</ecNumber>
    </recommendedName>
</protein>
<organism>
    <name type="scientific">Scheffersomyces stipitis (strain ATCC 58785 / CBS 6054 / NBRC 10063 / NRRL Y-11545)</name>
    <name type="common">Yeast</name>
    <name type="synonym">Pichia stipitis</name>
    <dbReference type="NCBI Taxonomy" id="322104"/>
    <lineage>
        <taxon>Eukaryota</taxon>
        <taxon>Fungi</taxon>
        <taxon>Dikarya</taxon>
        <taxon>Ascomycota</taxon>
        <taxon>Saccharomycotina</taxon>
        <taxon>Pichiomycetes</taxon>
        <taxon>Debaryomycetaceae</taxon>
        <taxon>Scheffersomyces</taxon>
    </lineage>
</organism>
<dbReference type="EC" id="6.3.5.-" evidence="1"/>
<dbReference type="EMBL" id="AAVQ01000001">
    <property type="protein sequence ID" value="EAZ63826.1"/>
    <property type="molecule type" value="Genomic_DNA"/>
</dbReference>
<dbReference type="RefSeq" id="XP_001387849.1">
    <property type="nucleotide sequence ID" value="XM_001387812.1"/>
</dbReference>
<dbReference type="SMR" id="A3GFV6"/>
<dbReference type="FunCoup" id="A3GFV6">
    <property type="interactions" value="379"/>
</dbReference>
<dbReference type="STRING" id="322104.A3GFV6"/>
<dbReference type="GeneID" id="4851155"/>
<dbReference type="KEGG" id="pic:PICST_52015"/>
<dbReference type="eggNOG" id="KOG2438">
    <property type="taxonomic scope" value="Eukaryota"/>
</dbReference>
<dbReference type="HOGENOM" id="CLU_019240_4_0_1"/>
<dbReference type="InParanoid" id="A3GFV6"/>
<dbReference type="OMA" id="ARKWWMG"/>
<dbReference type="OrthoDB" id="1722066at2759"/>
<dbReference type="Proteomes" id="UP000002258">
    <property type="component" value="Chromosome 1"/>
</dbReference>
<dbReference type="GO" id="GO:0030956">
    <property type="term" value="C:glutamyl-tRNA(Gln) amidotransferase complex"/>
    <property type="evidence" value="ECO:0007669"/>
    <property type="project" value="UniProtKB-UniRule"/>
</dbReference>
<dbReference type="GO" id="GO:0005739">
    <property type="term" value="C:mitochondrion"/>
    <property type="evidence" value="ECO:0007669"/>
    <property type="project" value="UniProtKB-SubCell"/>
</dbReference>
<dbReference type="GO" id="GO:0005524">
    <property type="term" value="F:ATP binding"/>
    <property type="evidence" value="ECO:0007669"/>
    <property type="project" value="UniProtKB-KW"/>
</dbReference>
<dbReference type="GO" id="GO:0050567">
    <property type="term" value="F:glutaminyl-tRNA synthase (glutamine-hydrolyzing) activity"/>
    <property type="evidence" value="ECO:0007669"/>
    <property type="project" value="UniProtKB-UniRule"/>
</dbReference>
<dbReference type="GO" id="GO:0070681">
    <property type="term" value="P:glutaminyl-tRNAGln biosynthesis via transamidation"/>
    <property type="evidence" value="ECO:0007669"/>
    <property type="project" value="UniProtKB-UniRule"/>
</dbReference>
<dbReference type="GO" id="GO:0032543">
    <property type="term" value="P:mitochondrial translation"/>
    <property type="evidence" value="ECO:0007669"/>
    <property type="project" value="UniProtKB-UniRule"/>
</dbReference>
<dbReference type="Gene3D" id="1.10.10.410">
    <property type="match status" value="1"/>
</dbReference>
<dbReference type="HAMAP" id="MF_00121">
    <property type="entry name" value="GatB"/>
    <property type="match status" value="1"/>
</dbReference>
<dbReference type="InterPro" id="IPR017959">
    <property type="entry name" value="Asn/Gln-tRNA_amidoTrfase_suB/E"/>
</dbReference>
<dbReference type="InterPro" id="IPR006075">
    <property type="entry name" value="Asn/Gln-tRNA_Trfase_suB/E_cat"/>
</dbReference>
<dbReference type="InterPro" id="IPR018027">
    <property type="entry name" value="Asn/Gln_amidotransferase"/>
</dbReference>
<dbReference type="InterPro" id="IPR003789">
    <property type="entry name" value="Asn/Gln_tRNA_amidoTrase-B-like"/>
</dbReference>
<dbReference type="InterPro" id="IPR004413">
    <property type="entry name" value="GatB"/>
</dbReference>
<dbReference type="InterPro" id="IPR023168">
    <property type="entry name" value="GatB_Yqey_C_2"/>
</dbReference>
<dbReference type="InterPro" id="IPR017958">
    <property type="entry name" value="Gln-tRNA_amidoTrfase_suB_CS"/>
</dbReference>
<dbReference type="InterPro" id="IPR014746">
    <property type="entry name" value="Gln_synth/guanido_kin_cat_dom"/>
</dbReference>
<dbReference type="NCBIfam" id="TIGR00133">
    <property type="entry name" value="gatB"/>
    <property type="match status" value="1"/>
</dbReference>
<dbReference type="NCBIfam" id="NF004012">
    <property type="entry name" value="PRK05477.1-2"/>
    <property type="match status" value="1"/>
</dbReference>
<dbReference type="PANTHER" id="PTHR11659">
    <property type="entry name" value="GLUTAMYL-TRNA GLN AMIDOTRANSFERASE SUBUNIT B MITOCHONDRIAL AND PROKARYOTIC PET112-RELATED"/>
    <property type="match status" value="1"/>
</dbReference>
<dbReference type="PANTHER" id="PTHR11659:SF0">
    <property type="entry name" value="GLUTAMYL-TRNA(GLN) AMIDOTRANSFERASE SUBUNIT B, MITOCHONDRIAL"/>
    <property type="match status" value="1"/>
</dbReference>
<dbReference type="Pfam" id="PF02934">
    <property type="entry name" value="GatB_N"/>
    <property type="match status" value="1"/>
</dbReference>
<dbReference type="Pfam" id="PF02637">
    <property type="entry name" value="GatB_Yqey"/>
    <property type="match status" value="1"/>
</dbReference>
<dbReference type="SMART" id="SM00845">
    <property type="entry name" value="GatB_Yqey"/>
    <property type="match status" value="1"/>
</dbReference>
<dbReference type="SUPFAM" id="SSF89095">
    <property type="entry name" value="GatB/YqeY motif"/>
    <property type="match status" value="1"/>
</dbReference>
<dbReference type="SUPFAM" id="SSF55931">
    <property type="entry name" value="Glutamine synthetase/guanido kinase"/>
    <property type="match status" value="1"/>
</dbReference>
<dbReference type="PROSITE" id="PS01234">
    <property type="entry name" value="GATB"/>
    <property type="match status" value="1"/>
</dbReference>